<accession>Q6IE47</accession>
<protein>
    <recommendedName>
        <fullName>Serine protease inhibitor Kazal-type 6</fullName>
    </recommendedName>
</protein>
<sequence length="105" mass="11667">MKVAGVFLLLSLALLCFFSGEFSQGGQDKRGWITRSEGRFPGKGVLRHRLFQINCGEFRDPKVFCTRESDPLCGSDGQTYGNKCAFCKALEKSSGKINLKHRGKC</sequence>
<organism>
    <name type="scientific">Rattus norvegicus</name>
    <name type="common">Rat</name>
    <dbReference type="NCBI Taxonomy" id="10116"/>
    <lineage>
        <taxon>Eukaryota</taxon>
        <taxon>Metazoa</taxon>
        <taxon>Chordata</taxon>
        <taxon>Craniata</taxon>
        <taxon>Vertebrata</taxon>
        <taxon>Euteleostomi</taxon>
        <taxon>Mammalia</taxon>
        <taxon>Eutheria</taxon>
        <taxon>Euarchontoglires</taxon>
        <taxon>Glires</taxon>
        <taxon>Rodentia</taxon>
        <taxon>Myomorpha</taxon>
        <taxon>Muroidea</taxon>
        <taxon>Muridae</taxon>
        <taxon>Murinae</taxon>
        <taxon>Rattus</taxon>
    </lineage>
</organism>
<keyword id="KW-1015">Disulfide bond</keyword>
<keyword id="KW-0646">Protease inhibitor</keyword>
<keyword id="KW-0873">Pyrrolidone carboxylic acid</keyword>
<keyword id="KW-1185">Reference proteome</keyword>
<keyword id="KW-0964">Secreted</keyword>
<keyword id="KW-0722">Serine protease inhibitor</keyword>
<keyword id="KW-0732">Signal</keyword>
<evidence type="ECO:0000250" key="1">
    <source>
        <dbReference type="UniProtKB" id="P01001"/>
    </source>
</evidence>
<evidence type="ECO:0000250" key="2">
    <source>
        <dbReference type="UniProtKB" id="Q6UWN8"/>
    </source>
</evidence>
<evidence type="ECO:0000250" key="3">
    <source>
        <dbReference type="UniProtKB" id="Q8BT20"/>
    </source>
</evidence>
<evidence type="ECO:0000255" key="4"/>
<evidence type="ECO:0000255" key="5">
    <source>
        <dbReference type="PROSITE-ProRule" id="PRU00798"/>
    </source>
</evidence>
<reference key="1">
    <citation type="journal article" date="2004" name="Nature">
        <title>Genome sequence of the Brown Norway rat yields insights into mammalian evolution.</title>
        <authorList>
            <person name="Gibbs R.A."/>
            <person name="Weinstock G.M."/>
            <person name="Metzker M.L."/>
            <person name="Muzny D.M."/>
            <person name="Sodergren E.J."/>
            <person name="Scherer S."/>
            <person name="Scott G."/>
            <person name="Steffen D."/>
            <person name="Worley K.C."/>
            <person name="Burch P.E."/>
            <person name="Okwuonu G."/>
            <person name="Hines S."/>
            <person name="Lewis L."/>
            <person name="Deramo C."/>
            <person name="Delgado O."/>
            <person name="Dugan-Rocha S."/>
            <person name="Miner G."/>
            <person name="Morgan M."/>
            <person name="Hawes A."/>
            <person name="Gill R."/>
            <person name="Holt R.A."/>
            <person name="Adams M.D."/>
            <person name="Amanatides P.G."/>
            <person name="Baden-Tillson H."/>
            <person name="Barnstead M."/>
            <person name="Chin S."/>
            <person name="Evans C.A."/>
            <person name="Ferriera S."/>
            <person name="Fosler C."/>
            <person name="Glodek A."/>
            <person name="Gu Z."/>
            <person name="Jennings D."/>
            <person name="Kraft C.L."/>
            <person name="Nguyen T."/>
            <person name="Pfannkoch C.M."/>
            <person name="Sitter C."/>
            <person name="Sutton G.G."/>
            <person name="Venter J.C."/>
            <person name="Woodage T."/>
            <person name="Smith D."/>
            <person name="Lee H.-M."/>
            <person name="Gustafson E."/>
            <person name="Cahill P."/>
            <person name="Kana A."/>
            <person name="Doucette-Stamm L."/>
            <person name="Weinstock K."/>
            <person name="Fechtel K."/>
            <person name="Weiss R.B."/>
            <person name="Dunn D.M."/>
            <person name="Green E.D."/>
            <person name="Blakesley R.W."/>
            <person name="Bouffard G.G."/>
            <person name="De Jong P.J."/>
            <person name="Osoegawa K."/>
            <person name="Zhu B."/>
            <person name="Marra M."/>
            <person name="Schein J."/>
            <person name="Bosdet I."/>
            <person name="Fjell C."/>
            <person name="Jones S."/>
            <person name="Krzywinski M."/>
            <person name="Mathewson C."/>
            <person name="Siddiqui A."/>
            <person name="Wye N."/>
            <person name="McPherson J."/>
            <person name="Zhao S."/>
            <person name="Fraser C.M."/>
            <person name="Shetty J."/>
            <person name="Shatsman S."/>
            <person name="Geer K."/>
            <person name="Chen Y."/>
            <person name="Abramzon S."/>
            <person name="Nierman W.C."/>
            <person name="Havlak P.H."/>
            <person name="Chen R."/>
            <person name="Durbin K.J."/>
            <person name="Egan A."/>
            <person name="Ren Y."/>
            <person name="Song X.-Z."/>
            <person name="Li B."/>
            <person name="Liu Y."/>
            <person name="Qin X."/>
            <person name="Cawley S."/>
            <person name="Cooney A.J."/>
            <person name="D'Souza L.M."/>
            <person name="Martin K."/>
            <person name="Wu J.Q."/>
            <person name="Gonzalez-Garay M.L."/>
            <person name="Jackson A.R."/>
            <person name="Kalafus K.J."/>
            <person name="McLeod M.P."/>
            <person name="Milosavljevic A."/>
            <person name="Virk D."/>
            <person name="Volkov A."/>
            <person name="Wheeler D.A."/>
            <person name="Zhang Z."/>
            <person name="Bailey J.A."/>
            <person name="Eichler E.E."/>
            <person name="Tuzun E."/>
            <person name="Birney E."/>
            <person name="Mongin E."/>
            <person name="Ureta-Vidal A."/>
            <person name="Woodwark C."/>
            <person name="Zdobnov E."/>
            <person name="Bork P."/>
            <person name="Suyama M."/>
            <person name="Torrents D."/>
            <person name="Alexandersson M."/>
            <person name="Trask B.J."/>
            <person name="Young J.M."/>
            <person name="Huang H."/>
            <person name="Wang H."/>
            <person name="Xing H."/>
            <person name="Daniels S."/>
            <person name="Gietzen D."/>
            <person name="Schmidt J."/>
            <person name="Stevens K."/>
            <person name="Vitt U."/>
            <person name="Wingrove J."/>
            <person name="Camara F."/>
            <person name="Mar Alba M."/>
            <person name="Abril J.F."/>
            <person name="Guigo R."/>
            <person name="Smit A."/>
            <person name="Dubchak I."/>
            <person name="Rubin E.M."/>
            <person name="Couronne O."/>
            <person name="Poliakov A."/>
            <person name="Huebner N."/>
            <person name="Ganten D."/>
            <person name="Goesele C."/>
            <person name="Hummel O."/>
            <person name="Kreitler T."/>
            <person name="Lee Y.-A."/>
            <person name="Monti J."/>
            <person name="Schulz H."/>
            <person name="Zimdahl H."/>
            <person name="Himmelbauer H."/>
            <person name="Lehrach H."/>
            <person name="Jacob H.J."/>
            <person name="Bromberg S."/>
            <person name="Gullings-Handley J."/>
            <person name="Jensen-Seaman M.I."/>
            <person name="Kwitek A.E."/>
            <person name="Lazar J."/>
            <person name="Pasko D."/>
            <person name="Tonellato P.J."/>
            <person name="Twigger S."/>
            <person name="Ponting C.P."/>
            <person name="Duarte J.M."/>
            <person name="Rice S."/>
            <person name="Goodstadt L."/>
            <person name="Beatson S.A."/>
            <person name="Emes R.D."/>
            <person name="Winter E.E."/>
            <person name="Webber C."/>
            <person name="Brandt P."/>
            <person name="Nyakatura G."/>
            <person name="Adetobi M."/>
            <person name="Chiaromonte F."/>
            <person name="Elnitski L."/>
            <person name="Eswara P."/>
            <person name="Hardison R.C."/>
            <person name="Hou M."/>
            <person name="Kolbe D."/>
            <person name="Makova K."/>
            <person name="Miller W."/>
            <person name="Nekrutenko A."/>
            <person name="Riemer C."/>
            <person name="Schwartz S."/>
            <person name="Taylor J."/>
            <person name="Yang S."/>
            <person name="Zhang Y."/>
            <person name="Lindpaintner K."/>
            <person name="Andrews T.D."/>
            <person name="Caccamo M."/>
            <person name="Clamp M."/>
            <person name="Clarke L."/>
            <person name="Curwen V."/>
            <person name="Durbin R.M."/>
            <person name="Eyras E."/>
            <person name="Searle S.M."/>
            <person name="Cooper G.M."/>
            <person name="Batzoglou S."/>
            <person name="Brudno M."/>
            <person name="Sidow A."/>
            <person name="Stone E.A."/>
            <person name="Payseur B.A."/>
            <person name="Bourque G."/>
            <person name="Lopez-Otin C."/>
            <person name="Puente X.S."/>
            <person name="Chakrabarti K."/>
            <person name="Chatterji S."/>
            <person name="Dewey C."/>
            <person name="Pachter L."/>
            <person name="Bray N."/>
            <person name="Yap V.B."/>
            <person name="Caspi A."/>
            <person name="Tesler G."/>
            <person name="Pevzner P.A."/>
            <person name="Haussler D."/>
            <person name="Roskin K.M."/>
            <person name="Baertsch R."/>
            <person name="Clawson H."/>
            <person name="Furey T.S."/>
            <person name="Hinrichs A.S."/>
            <person name="Karolchik D."/>
            <person name="Kent W.J."/>
            <person name="Rosenbloom K.R."/>
            <person name="Trumbower H."/>
            <person name="Weirauch M."/>
            <person name="Cooper D.N."/>
            <person name="Stenson P.D."/>
            <person name="Ma B."/>
            <person name="Brent M."/>
            <person name="Arumugam M."/>
            <person name="Shteynberg D."/>
            <person name="Copley R.R."/>
            <person name="Taylor M.S."/>
            <person name="Riethman H."/>
            <person name="Mudunuri U."/>
            <person name="Peterson J."/>
            <person name="Guyer M."/>
            <person name="Felsenfeld A."/>
            <person name="Old S."/>
            <person name="Mockrin S."/>
            <person name="Collins F.S."/>
        </authorList>
    </citation>
    <scope>NUCLEOTIDE SEQUENCE [LARGE SCALE GENOMIC DNA]</scope>
    <source>
        <strain>Brown Norway</strain>
    </source>
</reference>
<reference key="2">
    <citation type="journal article" date="2004" name="Genome Res.">
        <title>A genomic analysis of rat proteases and protease inhibitors.</title>
        <authorList>
            <person name="Puente X.S."/>
            <person name="Lopez-Otin C."/>
        </authorList>
    </citation>
    <scope>IDENTIFICATION</scope>
</reference>
<proteinExistence type="inferred from homology"/>
<name>ISK6_RAT</name>
<feature type="signal peptide" evidence="4">
    <location>
        <begin position="1"/>
        <end position="23"/>
    </location>
</feature>
<feature type="chain" id="PRO_0000016577" description="Serine protease inhibitor Kazal-type 6">
    <location>
        <begin position="24"/>
        <end position="105"/>
    </location>
</feature>
<feature type="domain" description="Kazal-like" evidence="5">
    <location>
        <begin position="49"/>
        <end position="105"/>
    </location>
</feature>
<feature type="site" description="Reactive bond" evidence="5">
    <location>
        <begin position="67"/>
        <end position="68"/>
    </location>
</feature>
<feature type="modified residue" description="Pyrrolidone carboxylic acid" evidence="1">
    <location>
        <position position="24"/>
    </location>
</feature>
<feature type="disulfide bond" evidence="5">
    <location>
        <begin position="55"/>
        <end position="87"/>
    </location>
</feature>
<feature type="disulfide bond" evidence="5">
    <location>
        <begin position="65"/>
        <end position="84"/>
    </location>
</feature>
<feature type="disulfide bond" evidence="5">
    <location>
        <begin position="73"/>
        <end position="105"/>
    </location>
</feature>
<gene>
    <name type="primary">Spink6</name>
    <name type="synonym">Spink5l1</name>
</gene>
<comment type="function">
    <text evidence="2">Serine protease inhibitor selective for kallikreins. Efficiently inhibits KLK4, KLK5, KLK6, KLK7, KLK12, KLK13 and KLK14. Doesn't inhibit KLK8.</text>
</comment>
<comment type="subcellular location">
    <subcellularLocation>
        <location evidence="3">Secreted</location>
    </subcellularLocation>
</comment>
<dbReference type="EMBL" id="AC095532">
    <property type="status" value="NOT_ANNOTATED_CDS"/>
    <property type="molecule type" value="Genomic_DNA"/>
</dbReference>
<dbReference type="EMBL" id="BN000346">
    <property type="protein sequence ID" value="CAE51398.1"/>
    <property type="molecule type" value="mRNA"/>
</dbReference>
<dbReference type="RefSeq" id="NP_001008874.1">
    <property type="nucleotide sequence ID" value="NM_001008874.1"/>
</dbReference>
<dbReference type="RefSeq" id="XP_063133570.1">
    <property type="nucleotide sequence ID" value="XM_063277500.1"/>
</dbReference>
<dbReference type="SMR" id="Q6IE47"/>
<dbReference type="FunCoup" id="Q6IE47">
    <property type="interactions" value="2"/>
</dbReference>
<dbReference type="STRING" id="10116.ENSRNOP00000017489"/>
<dbReference type="MEROPS" id="I01.015"/>
<dbReference type="PhosphoSitePlus" id="Q6IE47"/>
<dbReference type="PaxDb" id="10116-ENSRNOP00000017489"/>
<dbReference type="GeneID" id="408235"/>
<dbReference type="UCSC" id="RGD:1303338">
    <property type="organism name" value="rat"/>
</dbReference>
<dbReference type="AGR" id="RGD:1303338"/>
<dbReference type="RGD" id="1303338">
    <property type="gene designation" value="Spink6"/>
</dbReference>
<dbReference type="eggNOG" id="KOG3649">
    <property type="taxonomic scope" value="Eukaryota"/>
</dbReference>
<dbReference type="InParanoid" id="Q6IE47"/>
<dbReference type="PhylomeDB" id="Q6IE47"/>
<dbReference type="Reactome" id="R-RNO-6809371">
    <property type="pathway name" value="Formation of the cornified envelope"/>
</dbReference>
<dbReference type="PRO" id="PR:Q6IE47"/>
<dbReference type="Proteomes" id="UP000002494">
    <property type="component" value="Unplaced"/>
</dbReference>
<dbReference type="GO" id="GO:0005576">
    <property type="term" value="C:extracellular region"/>
    <property type="evidence" value="ECO:0000266"/>
    <property type="project" value="RGD"/>
</dbReference>
<dbReference type="GO" id="GO:0004867">
    <property type="term" value="F:serine-type endopeptidase inhibitor activity"/>
    <property type="evidence" value="ECO:0000266"/>
    <property type="project" value="RGD"/>
</dbReference>
<dbReference type="CDD" id="cd00104">
    <property type="entry name" value="KAZAL_FS"/>
    <property type="match status" value="1"/>
</dbReference>
<dbReference type="FunFam" id="3.30.60.30:FF:000037">
    <property type="entry name" value="Ovomucoid"/>
    <property type="match status" value="1"/>
</dbReference>
<dbReference type="Gene3D" id="3.30.60.30">
    <property type="match status" value="1"/>
</dbReference>
<dbReference type="InterPro" id="IPR050159">
    <property type="entry name" value="Kazal-type_SerProtInhib"/>
</dbReference>
<dbReference type="InterPro" id="IPR002350">
    <property type="entry name" value="Kazal_dom"/>
</dbReference>
<dbReference type="InterPro" id="IPR036058">
    <property type="entry name" value="Kazal_dom_sf"/>
</dbReference>
<dbReference type="InterPro" id="IPR001239">
    <property type="entry name" value="Prot_inh_Kazal-m"/>
</dbReference>
<dbReference type="PANTHER" id="PTHR47499:SF6">
    <property type="entry name" value="SERINE PROTEASE INHIBITOR KAZAL-TYPE 6"/>
    <property type="match status" value="1"/>
</dbReference>
<dbReference type="PANTHER" id="PTHR47499">
    <property type="entry name" value="SERINE PROTEASE INHIBITOR KAZAL-TYPE 7 SPINK7"/>
    <property type="match status" value="1"/>
</dbReference>
<dbReference type="Pfam" id="PF00050">
    <property type="entry name" value="Kazal_1"/>
    <property type="match status" value="1"/>
</dbReference>
<dbReference type="PRINTS" id="PR00290">
    <property type="entry name" value="KAZALINHBTR"/>
</dbReference>
<dbReference type="SMART" id="SM00280">
    <property type="entry name" value="KAZAL"/>
    <property type="match status" value="1"/>
</dbReference>
<dbReference type="SUPFAM" id="SSF100895">
    <property type="entry name" value="Kazal-type serine protease inhibitors"/>
    <property type="match status" value="1"/>
</dbReference>
<dbReference type="PROSITE" id="PS00282">
    <property type="entry name" value="KAZAL_1"/>
    <property type="match status" value="1"/>
</dbReference>
<dbReference type="PROSITE" id="PS51465">
    <property type="entry name" value="KAZAL_2"/>
    <property type="match status" value="1"/>
</dbReference>